<sequence>MSTIEERVKKIIGEQLGVKQEEVTNNASFVEDLGADSLDTVELVMALEEEFDTEIPDEEAEKITTVQAAIDYINGHQA</sequence>
<organism>
    <name type="scientific">Salmonella dublin (strain CT_02021853)</name>
    <dbReference type="NCBI Taxonomy" id="439851"/>
    <lineage>
        <taxon>Bacteria</taxon>
        <taxon>Pseudomonadati</taxon>
        <taxon>Pseudomonadota</taxon>
        <taxon>Gammaproteobacteria</taxon>
        <taxon>Enterobacterales</taxon>
        <taxon>Enterobacteriaceae</taxon>
        <taxon>Salmonella</taxon>
    </lineage>
</organism>
<gene>
    <name evidence="1" type="primary">acpP</name>
    <name type="ordered locus">SeD_A2173</name>
</gene>
<proteinExistence type="inferred from homology"/>
<accession>B5FKB1</accession>
<keyword id="KW-0963">Cytoplasm</keyword>
<keyword id="KW-0275">Fatty acid biosynthesis</keyword>
<keyword id="KW-0276">Fatty acid metabolism</keyword>
<keyword id="KW-0444">Lipid biosynthesis</keyword>
<keyword id="KW-0443">Lipid metabolism</keyword>
<keyword id="KW-0596">Phosphopantetheine</keyword>
<keyword id="KW-0597">Phosphoprotein</keyword>
<name>ACP_SALDC</name>
<feature type="chain" id="PRO_1000139061" description="Acyl carrier protein">
    <location>
        <begin position="1"/>
        <end position="78"/>
    </location>
</feature>
<feature type="domain" description="Carrier" evidence="2">
    <location>
        <begin position="2"/>
        <end position="77"/>
    </location>
</feature>
<feature type="modified residue" description="O-(pantetheine 4'-phosphoryl)serine" evidence="2">
    <location>
        <position position="37"/>
    </location>
</feature>
<dbReference type="EMBL" id="CP001144">
    <property type="protein sequence ID" value="ACH74484.1"/>
    <property type="molecule type" value="Genomic_DNA"/>
</dbReference>
<dbReference type="RefSeq" id="WP_000103754.1">
    <property type="nucleotide sequence ID" value="NC_011205.1"/>
</dbReference>
<dbReference type="SMR" id="B5FKB1"/>
<dbReference type="GeneID" id="98387866"/>
<dbReference type="KEGG" id="sed:SeD_A2173"/>
<dbReference type="HOGENOM" id="CLU_108696_5_1_6"/>
<dbReference type="UniPathway" id="UPA00094"/>
<dbReference type="Proteomes" id="UP000008322">
    <property type="component" value="Chromosome"/>
</dbReference>
<dbReference type="GO" id="GO:0005829">
    <property type="term" value="C:cytosol"/>
    <property type="evidence" value="ECO:0007669"/>
    <property type="project" value="TreeGrafter"/>
</dbReference>
<dbReference type="GO" id="GO:0016020">
    <property type="term" value="C:membrane"/>
    <property type="evidence" value="ECO:0007669"/>
    <property type="project" value="GOC"/>
</dbReference>
<dbReference type="GO" id="GO:0000035">
    <property type="term" value="F:acyl binding"/>
    <property type="evidence" value="ECO:0007669"/>
    <property type="project" value="TreeGrafter"/>
</dbReference>
<dbReference type="GO" id="GO:0000036">
    <property type="term" value="F:acyl carrier activity"/>
    <property type="evidence" value="ECO:0007669"/>
    <property type="project" value="UniProtKB-UniRule"/>
</dbReference>
<dbReference type="GO" id="GO:0009245">
    <property type="term" value="P:lipid A biosynthetic process"/>
    <property type="evidence" value="ECO:0007669"/>
    <property type="project" value="TreeGrafter"/>
</dbReference>
<dbReference type="FunFam" id="1.10.1200.10:FF:000001">
    <property type="entry name" value="Acyl carrier protein"/>
    <property type="match status" value="1"/>
</dbReference>
<dbReference type="Gene3D" id="1.10.1200.10">
    <property type="entry name" value="ACP-like"/>
    <property type="match status" value="1"/>
</dbReference>
<dbReference type="HAMAP" id="MF_01217">
    <property type="entry name" value="Acyl_carrier"/>
    <property type="match status" value="1"/>
</dbReference>
<dbReference type="InterPro" id="IPR003231">
    <property type="entry name" value="ACP"/>
</dbReference>
<dbReference type="InterPro" id="IPR036736">
    <property type="entry name" value="ACP-like_sf"/>
</dbReference>
<dbReference type="InterPro" id="IPR009081">
    <property type="entry name" value="PP-bd_ACP"/>
</dbReference>
<dbReference type="InterPro" id="IPR006162">
    <property type="entry name" value="Ppantetheine_attach_site"/>
</dbReference>
<dbReference type="NCBIfam" id="TIGR00517">
    <property type="entry name" value="acyl_carrier"/>
    <property type="match status" value="1"/>
</dbReference>
<dbReference type="NCBIfam" id="NF002148">
    <property type="entry name" value="PRK00982.1-2"/>
    <property type="match status" value="1"/>
</dbReference>
<dbReference type="NCBIfam" id="NF002149">
    <property type="entry name" value="PRK00982.1-3"/>
    <property type="match status" value="1"/>
</dbReference>
<dbReference type="NCBIfam" id="NF002150">
    <property type="entry name" value="PRK00982.1-4"/>
    <property type="match status" value="1"/>
</dbReference>
<dbReference type="NCBIfam" id="NF002151">
    <property type="entry name" value="PRK00982.1-5"/>
    <property type="match status" value="1"/>
</dbReference>
<dbReference type="PANTHER" id="PTHR20863">
    <property type="entry name" value="ACYL CARRIER PROTEIN"/>
    <property type="match status" value="1"/>
</dbReference>
<dbReference type="PANTHER" id="PTHR20863:SF76">
    <property type="entry name" value="CARRIER DOMAIN-CONTAINING PROTEIN"/>
    <property type="match status" value="1"/>
</dbReference>
<dbReference type="Pfam" id="PF00550">
    <property type="entry name" value="PP-binding"/>
    <property type="match status" value="1"/>
</dbReference>
<dbReference type="SUPFAM" id="SSF47336">
    <property type="entry name" value="ACP-like"/>
    <property type="match status" value="1"/>
</dbReference>
<dbReference type="PROSITE" id="PS50075">
    <property type="entry name" value="CARRIER"/>
    <property type="match status" value="1"/>
</dbReference>
<dbReference type="PROSITE" id="PS00012">
    <property type="entry name" value="PHOSPHOPANTETHEINE"/>
    <property type="match status" value="1"/>
</dbReference>
<evidence type="ECO:0000255" key="1">
    <source>
        <dbReference type="HAMAP-Rule" id="MF_01217"/>
    </source>
</evidence>
<evidence type="ECO:0000255" key="2">
    <source>
        <dbReference type="PROSITE-ProRule" id="PRU00258"/>
    </source>
</evidence>
<comment type="function">
    <text evidence="1">Carrier of the growing fatty acid chain in fatty acid biosynthesis.</text>
</comment>
<comment type="pathway">
    <text evidence="1">Lipid metabolism; fatty acid biosynthesis.</text>
</comment>
<comment type="subcellular location">
    <subcellularLocation>
        <location evidence="1">Cytoplasm</location>
    </subcellularLocation>
</comment>
<comment type="PTM">
    <text evidence="1">4'-phosphopantetheine is transferred from CoA to a specific serine of apo-ACP by AcpS. This modification is essential for activity because fatty acids are bound in thioester linkage to the sulfhydryl of the prosthetic group.</text>
</comment>
<comment type="similarity">
    <text evidence="1">Belongs to the acyl carrier protein (ACP) family.</text>
</comment>
<reference key="1">
    <citation type="journal article" date="2011" name="J. Bacteriol.">
        <title>Comparative genomics of 28 Salmonella enterica isolates: evidence for CRISPR-mediated adaptive sublineage evolution.</title>
        <authorList>
            <person name="Fricke W.F."/>
            <person name="Mammel M.K."/>
            <person name="McDermott P.F."/>
            <person name="Tartera C."/>
            <person name="White D.G."/>
            <person name="Leclerc J.E."/>
            <person name="Ravel J."/>
            <person name="Cebula T.A."/>
        </authorList>
    </citation>
    <scope>NUCLEOTIDE SEQUENCE [LARGE SCALE GENOMIC DNA]</scope>
    <source>
        <strain>CT_02021853</strain>
    </source>
</reference>
<protein>
    <recommendedName>
        <fullName evidence="1">Acyl carrier protein</fullName>
        <shortName evidence="1">ACP</shortName>
    </recommendedName>
</protein>